<evidence type="ECO:0000255" key="1"/>
<evidence type="ECO:0000269" key="2">
    <source>
    </source>
</evidence>
<evidence type="ECO:0000269" key="3">
    <source>
    </source>
</evidence>
<evidence type="ECO:0000269" key="4">
    <source>
    </source>
</evidence>
<evidence type="ECO:0000269" key="5">
    <source>
    </source>
</evidence>
<evidence type="ECO:0000269" key="6">
    <source>
    </source>
</evidence>
<evidence type="ECO:0000303" key="7">
    <source>
    </source>
</evidence>
<evidence type="ECO:0000303" key="8">
    <source>
    </source>
</evidence>
<evidence type="ECO:0000312" key="9">
    <source>
        <dbReference type="EMBL" id="AAU26542.1"/>
    </source>
</evidence>
<evidence type="ECO:0007744" key="10">
    <source>
        <dbReference type="PDB" id="5X1U"/>
    </source>
</evidence>
<evidence type="ECO:0007744" key="11">
    <source>
        <dbReference type="PDB" id="6EXA"/>
    </source>
</evidence>
<evidence type="ECO:0007744" key="12">
    <source>
        <dbReference type="PDB" id="6EXB"/>
    </source>
</evidence>
<evidence type="ECO:0007744" key="13">
    <source>
        <dbReference type="PDB" id="6EXC"/>
    </source>
</evidence>
<evidence type="ECO:0007744" key="14">
    <source>
        <dbReference type="PDB" id="6EXD"/>
    </source>
</evidence>
<evidence type="ECO:0007744" key="15">
    <source>
        <dbReference type="PDB" id="6EXE"/>
    </source>
</evidence>
<evidence type="ECO:0007744" key="16">
    <source>
        <dbReference type="PDB" id="6SZ9"/>
    </source>
</evidence>
<evidence type="ECO:0007829" key="17">
    <source>
        <dbReference type="PDB" id="6EXA"/>
    </source>
</evidence>
<gene>
    <name evidence="7" type="primary">dotM</name>
    <name evidence="9" type="synonym">icmP</name>
    <name evidence="9" type="ordered locus">lpg0445</name>
</gene>
<name>DOTM_LEGPH</name>
<accession>Q5ZYC7</accession>
<reference key="1">
    <citation type="journal article" date="2004" name="Science">
        <title>The genomic sequence of the accidental pathogen Legionella pneumophila.</title>
        <authorList>
            <person name="Chien M."/>
            <person name="Morozova I."/>
            <person name="Shi S."/>
            <person name="Sheng H."/>
            <person name="Chen J."/>
            <person name="Gomez S.M."/>
            <person name="Asamani G."/>
            <person name="Hill K."/>
            <person name="Nuara J."/>
            <person name="Feder M."/>
            <person name="Rineer J."/>
            <person name="Greenberg J.J."/>
            <person name="Steshenko V."/>
            <person name="Park S.H."/>
            <person name="Zhao B."/>
            <person name="Teplitskaya E."/>
            <person name="Edwards J.R."/>
            <person name="Pampou S."/>
            <person name="Georghiou A."/>
            <person name="Chou I.-C."/>
            <person name="Iannuccilli W."/>
            <person name="Ulz M.E."/>
            <person name="Kim D.H."/>
            <person name="Geringer-Sameth A."/>
            <person name="Goldsberry C."/>
            <person name="Morozov P."/>
            <person name="Fischer S.G."/>
            <person name="Segal G."/>
            <person name="Qu X."/>
            <person name="Rzhetsky A."/>
            <person name="Zhang P."/>
            <person name="Cayanis E."/>
            <person name="De Jong P.J."/>
            <person name="Ju J."/>
            <person name="Kalachikov S."/>
            <person name="Shuman H.A."/>
            <person name="Russo J.J."/>
        </authorList>
    </citation>
    <scope>NUCLEOTIDE SEQUENCE [LARGE SCALE GENOMIC DNA]</scope>
    <source>
        <strain>Philadelphia 1 / ATCC 33152 / DSM 7513</strain>
    </source>
</reference>
<reference key="2">
    <citation type="journal article" date="2006" name="Mol. Microbiol.">
        <title>Identification of the core transmembrane complex of the Legionella Dot/Icm type IV secretion system.</title>
        <authorList>
            <person name="Vincent C.D."/>
            <person name="Friedman J.R."/>
            <person name="Jeong K.C."/>
            <person name="Buford E.C."/>
            <person name="Miller J.L."/>
            <person name="Vogel J.P."/>
        </authorList>
    </citation>
    <scope>FUNCTION</scope>
    <scope>SUBUNIT</scope>
    <scope>SUBCELLULAR LOCATION</scope>
    <source>
        <strain>Philadelphia 1 / Lp02</strain>
    </source>
</reference>
<reference key="3">
    <citation type="journal article" date="2012" name="Mol. Microbiol.">
        <title>Identification of the DotL coupling protein subcomplex of the Legionella Dot/Icm type IV secretion system.</title>
        <authorList>
            <person name="Vincent C.D."/>
            <person name="Friedman J.R."/>
            <person name="Jeong K.C."/>
            <person name="Sutherland M.C."/>
            <person name="Vogel J.P."/>
        </authorList>
    </citation>
    <scope>FUNCTION</scope>
    <scope>SUBUNIT</scope>
    <scope>SUBCELLULAR LOCATION</scope>
    <source>
        <strain>Philadelphia 1 / Lp02</strain>
    </source>
</reference>
<reference evidence="10" key="4">
    <citation type="journal article" date="2017" name="Nat. Microbiol.">
        <title>Architecture of the type IV coupling protein complex of Legionella pneumophila.</title>
        <authorList>
            <person name="Kwak M.J."/>
            <person name="Kim J.D."/>
            <person name="Kim H."/>
            <person name="Kim C."/>
            <person name="Bowman J.W."/>
            <person name="Kim S."/>
            <person name="Joo K."/>
            <person name="Lee J."/>
            <person name="Jin K.S."/>
            <person name="Kim Y.G."/>
            <person name="Lee N.K."/>
            <person name="Jung J.U."/>
            <person name="Oh B.H."/>
        </authorList>
    </citation>
    <scope>X-RAY CRYSTALLOGRAPHY (1.80 ANGSTROMS) OF 158-365</scope>
    <scope>SUBUNIT</scope>
    <source>
        <strain>Philadelphia 1 / ATCC 33152 / DSM 7513</strain>
    </source>
</reference>
<reference evidence="11 12 13 14 15" key="5">
    <citation type="journal article" date="2018" name="Nat. Commun.">
        <title>Legionella DotM structure reveals a role in effector recruiting to the Type 4B secretion system.</title>
        <authorList>
            <person name="Meir A."/>
            <person name="Chetrit D."/>
            <person name="Liu L."/>
            <person name="Roy C.R."/>
            <person name="Waksman G."/>
        </authorList>
    </citation>
    <scope>X-RAY CRYSTALLOGRAPHY (1.79 ANGSTROMS) OF 153-380 OF WILD-TYPE AND MUTANTS</scope>
    <scope>FUNCTION</scope>
    <scope>DOMAIN</scope>
    <scope>MUTAGENESIS OF 196-ARG-ARG-197 AND ARG-217</scope>
</reference>
<reference evidence="16" key="6">
    <citation type="journal article" date="2020" name="Nat. Commun.">
        <title>Mechanism of effector capture and delivery by the type IV secretion system from Legionella pneumophila.</title>
        <authorList>
            <person name="Meir A."/>
            <person name="Mace K."/>
            <person name="Lukoyanova N."/>
            <person name="Chetrit D."/>
            <person name="Hospenthal M.K."/>
            <person name="Redzej A."/>
            <person name="Roy C."/>
            <person name="Waksman G."/>
        </authorList>
    </citation>
    <scope>STRUCTURE BY ELECTRON MICROSCOPY (3.70 ANGSTROMS)</scope>
    <scope>FUNCTION</scope>
    <scope>SUBUNIT</scope>
    <scope>MUTAGENESIS OF THR-205; LEU-208; TYR-211; 300-VAL--SER-303 AND 326-GLN-THR-327</scope>
    <source>
        <strain>Philadelphia 1 / Lp01</strain>
    </source>
</reference>
<feature type="chain" id="PRO_0000455591" description="Type 4 apparatus protein DotM">
    <location>
        <begin position="1"/>
        <end position="380"/>
    </location>
</feature>
<feature type="transmembrane region" description="Helical" evidence="1">
    <location>
        <begin position="18"/>
        <end position="38"/>
    </location>
</feature>
<feature type="transmembrane region" description="Helical" evidence="1">
    <location>
        <begin position="99"/>
        <end position="119"/>
    </location>
</feature>
<feature type="mutagenesis site" description="Results in a significant decrease in replication in macrophages. Displays lower levels of effector translocation." evidence="5">
    <original>RR</original>
    <variation>EE</variation>
    <location>
        <begin position="196"/>
        <end position="197"/>
    </location>
</feature>
<feature type="mutagenesis site" description="Abolishes intracellular growth in A.castellanii; when associated with R-208 and R-211." evidence="6">
    <original>T</original>
    <variation>R</variation>
    <location>
        <position position="205"/>
    </location>
</feature>
<feature type="mutagenesis site" description="Abolishes intracellular growth in A.castellanii; when associated with R-205 and R-211." evidence="6">
    <original>L</original>
    <variation>R</variation>
    <location>
        <position position="208"/>
    </location>
</feature>
<feature type="mutagenesis site" description="Abolishes intracellular growth in A.castellanii; when associated with R-205 and R-208." evidence="6">
    <original>Y</original>
    <variation>R</variation>
    <location>
        <position position="211"/>
    </location>
</feature>
<feature type="mutagenesis site" description="Results in a significant decrease in replication in macrophages. Displays lower levels of effector translocation." evidence="5">
    <original>R</original>
    <variation>E</variation>
    <location>
        <position position="217"/>
    </location>
</feature>
<feature type="mutagenesis site" description="Abolishes intracellular growth in A.castellanii." evidence="6">
    <original>VVPS</original>
    <variation>RRPR</variation>
    <location>
        <begin position="300"/>
        <end position="303"/>
    </location>
</feature>
<feature type="mutagenesis site" description="Abolishes intracellular growth in A.castellanii." evidence="6">
    <original>QT</original>
    <variation>RR</variation>
    <location>
        <begin position="326"/>
        <end position="327"/>
    </location>
</feature>
<feature type="helix" evidence="17">
    <location>
        <begin position="165"/>
        <end position="171"/>
    </location>
</feature>
<feature type="helix" evidence="17">
    <location>
        <begin position="180"/>
        <end position="183"/>
    </location>
</feature>
<feature type="helix" evidence="17">
    <location>
        <begin position="197"/>
        <end position="208"/>
    </location>
</feature>
<feature type="helix" evidence="17">
    <location>
        <begin position="215"/>
        <end position="217"/>
    </location>
</feature>
<feature type="helix" evidence="17">
    <location>
        <begin position="220"/>
        <end position="233"/>
    </location>
</feature>
<feature type="helix" evidence="17">
    <location>
        <begin position="237"/>
        <end position="253"/>
    </location>
</feature>
<feature type="helix" evidence="17">
    <location>
        <begin position="258"/>
        <end position="261"/>
    </location>
</feature>
<feature type="helix" evidence="17">
    <location>
        <begin position="262"/>
        <end position="268"/>
    </location>
</feature>
<feature type="helix" evidence="17">
    <location>
        <begin position="272"/>
        <end position="279"/>
    </location>
</feature>
<feature type="helix" evidence="17">
    <location>
        <begin position="284"/>
        <end position="295"/>
    </location>
</feature>
<feature type="turn" evidence="17">
    <location>
        <begin position="296"/>
        <end position="298"/>
    </location>
</feature>
<feature type="helix" evidence="17">
    <location>
        <begin position="303"/>
        <end position="305"/>
    </location>
</feature>
<feature type="helix" evidence="17">
    <location>
        <begin position="309"/>
        <end position="312"/>
    </location>
</feature>
<feature type="helix" evidence="17">
    <location>
        <begin position="314"/>
        <end position="321"/>
    </location>
</feature>
<feature type="turn" evidence="17">
    <location>
        <begin position="322"/>
        <end position="324"/>
    </location>
</feature>
<feature type="helix" evidence="17">
    <location>
        <begin position="330"/>
        <end position="332"/>
    </location>
</feature>
<feature type="helix" evidence="17">
    <location>
        <begin position="333"/>
        <end position="345"/>
    </location>
</feature>
<feature type="helix" evidence="17">
    <location>
        <begin position="355"/>
        <end position="366"/>
    </location>
</feature>
<feature type="helix" evidence="17">
    <location>
        <begin position="372"/>
        <end position="377"/>
    </location>
</feature>
<keyword id="KW-0002">3D-structure</keyword>
<keyword id="KW-0997">Cell inner membrane</keyword>
<keyword id="KW-1003">Cell membrane</keyword>
<keyword id="KW-0472">Membrane</keyword>
<keyword id="KW-0653">Protein transport</keyword>
<keyword id="KW-1185">Reference proteome</keyword>
<keyword id="KW-0812">Transmembrane</keyword>
<keyword id="KW-1133">Transmembrane helix</keyword>
<keyword id="KW-0813">Transport</keyword>
<keyword id="KW-0843">Virulence</keyword>
<dbReference type="EMBL" id="AE017354">
    <property type="protein sequence ID" value="AAU26542.1"/>
    <property type="molecule type" value="Genomic_DNA"/>
</dbReference>
<dbReference type="RefSeq" id="YP_094489.1">
    <property type="nucleotide sequence ID" value="NC_002942.5"/>
</dbReference>
<dbReference type="PDB" id="5X1U">
    <property type="method" value="X-ray"/>
    <property type="resolution" value="1.80 A"/>
    <property type="chains" value="A/B=158-365"/>
</dbReference>
<dbReference type="PDB" id="6EXA">
    <property type="method" value="X-ray"/>
    <property type="resolution" value="1.79 A"/>
    <property type="chains" value="A/B=153-380"/>
</dbReference>
<dbReference type="PDB" id="6EXB">
    <property type="method" value="X-ray"/>
    <property type="resolution" value="1.84 A"/>
    <property type="chains" value="A/B=153-380"/>
</dbReference>
<dbReference type="PDB" id="6EXC">
    <property type="method" value="X-ray"/>
    <property type="resolution" value="2.16 A"/>
    <property type="chains" value="A/B=153-380"/>
</dbReference>
<dbReference type="PDB" id="6EXD">
    <property type="method" value="X-ray"/>
    <property type="resolution" value="2.14 A"/>
    <property type="chains" value="A/B=153-380"/>
</dbReference>
<dbReference type="PDB" id="6EXE">
    <property type="method" value="X-ray"/>
    <property type="resolution" value="2.00 A"/>
    <property type="chains" value="A/B=153-380"/>
</dbReference>
<dbReference type="PDB" id="6SZ9">
    <property type="method" value="EM"/>
    <property type="resolution" value="3.70 A"/>
    <property type="chains" value="B=1-380"/>
</dbReference>
<dbReference type="PDB" id="7OVB">
    <property type="method" value="EM"/>
    <property type="resolution" value="3.61 A"/>
    <property type="chains" value="B=1-380"/>
</dbReference>
<dbReference type="PDBsum" id="5X1U"/>
<dbReference type="PDBsum" id="6EXA"/>
<dbReference type="PDBsum" id="6EXB"/>
<dbReference type="PDBsum" id="6EXC"/>
<dbReference type="PDBsum" id="6EXD"/>
<dbReference type="PDBsum" id="6EXE"/>
<dbReference type="PDBsum" id="6SZ9"/>
<dbReference type="PDBsum" id="7OVB"/>
<dbReference type="EMDB" id="EMD-10350"/>
<dbReference type="EMDB" id="EMD-13083"/>
<dbReference type="SMR" id="Q5ZYC7"/>
<dbReference type="STRING" id="272624.lpg0445"/>
<dbReference type="TCDB" id="3.A.7.9.1">
    <property type="family name" value="the type iv (conjugal dna-protein transfer or virb) secretory pathway (ivsp) family"/>
</dbReference>
<dbReference type="PaxDb" id="272624-lpg0445"/>
<dbReference type="DNASU" id="3077691"/>
<dbReference type="KEGG" id="lpn:lpg0445"/>
<dbReference type="PATRIC" id="fig|272624.6.peg.461"/>
<dbReference type="eggNOG" id="ENOG5031YVT">
    <property type="taxonomic scope" value="Bacteria"/>
</dbReference>
<dbReference type="HOGENOM" id="CLU_733164_0_0_6"/>
<dbReference type="OrthoDB" id="5616932at2"/>
<dbReference type="Proteomes" id="UP000000609">
    <property type="component" value="Chromosome"/>
</dbReference>
<dbReference type="GO" id="GO:0005886">
    <property type="term" value="C:plasma membrane"/>
    <property type="evidence" value="ECO:0007669"/>
    <property type="project" value="UniProtKB-SubCell"/>
</dbReference>
<dbReference type="GO" id="GO:0015031">
    <property type="term" value="P:protein transport"/>
    <property type="evidence" value="ECO:0007669"/>
    <property type="project" value="UniProtKB-KW"/>
</dbReference>
<dbReference type="InterPro" id="IPR049921">
    <property type="entry name" value="DotM-like"/>
</dbReference>
<dbReference type="InterPro" id="IPR056464">
    <property type="entry name" value="DotM_C"/>
</dbReference>
<dbReference type="NCBIfam" id="NF033890">
    <property type="entry name" value="DotM_IcmP_IVB"/>
    <property type="match status" value="1"/>
</dbReference>
<dbReference type="Pfam" id="PF23127">
    <property type="entry name" value="DotM_C"/>
    <property type="match status" value="1"/>
</dbReference>
<organism>
    <name type="scientific">Legionella pneumophila subsp. pneumophila (strain Philadelphia 1 / ATCC 33152 / DSM 7513)</name>
    <dbReference type="NCBI Taxonomy" id="272624"/>
    <lineage>
        <taxon>Bacteria</taxon>
        <taxon>Pseudomonadati</taxon>
        <taxon>Pseudomonadota</taxon>
        <taxon>Gammaproteobacteria</taxon>
        <taxon>Legionellales</taxon>
        <taxon>Legionellaceae</taxon>
        <taxon>Legionella</taxon>
    </lineage>
</organism>
<protein>
    <recommendedName>
        <fullName evidence="8">Type 4 apparatus protein DotM</fullName>
    </recommendedName>
</protein>
<sequence>MYIEMAQQQQQSGSDNSMAPVWIVILLFITAYFVWALAHQYIVSFVFTINIWQARLVNLFLNNQLLANQIYLMQTLDPNTVNWDQMVTVMRAVGDYMRYPVICILVVLAFVLYNSNVTLKYRKTYDMKSLRAQEQFNWPAIMPIVKEDLVSQDVNKGPWAMALTPMEFARKYNLLRKDDALLDNPVPGEEMTAGIRRGDAKRVFTMQLGPYWDGFERCSPQAYALSAVFMARMNRDRDAANNILKVLDKTFVDGKPDFSVARPVMKKYQNSELVQEVVAKHAYVLTVIASLLEAAREDGVVPSSEFLWLKPVDRRLWYMLNCVGRQTPYSEVAGPFAHWKAEKEMGRRSLVPMIDEAIRALEIAVKEVRLTPRQMEELEP</sequence>
<proteinExistence type="evidence at protein level"/>
<comment type="function">
    <text evidence="2 3 5 6">Component of the Dot/Icm type IVB secretion system (T4BSS), which is used to inject bacterial effector proteins into eukaryotic host cells (PubMed:17040490, PubMed:22694730, PubMed:32513920). Part of a subcomplex which recruits effector proteins and delivers them to the core transmembrane subcomplex (PubMed:32513920). Forms the interacting surface for recruitment of acidic Glu-rich motif-containing effectors (PubMed:29410427).</text>
</comment>
<comment type="subunit">
    <text evidence="2 3 4 6">The T4BSS is a complex nanomachine composed of several subcomplexes. This subunit is part of the Type IV Coupling Complex (T4CC), a subcomplex composed of the DotLMNYZ core and the IcmSW-LvgA adapter subunits, linked by the C-terminal tail of DotL (PubMed:17040490, PubMed:22694730, PubMed:28714967, PubMed:32513920). Six DotLMNYZ hetero-pentameric units may assemble into a hexameric nanomachine, forming an inner membrane channel for effectors to pass through (PubMed:32513920). Interacts directly with DotL (PubMed:22694730, PubMed:32513920).</text>
</comment>
<comment type="subcellular location">
    <subcellularLocation>
        <location evidence="2 3">Cell inner membrane</location>
        <topology evidence="1">Multi-pass membrane protein</topology>
    </subcellularLocation>
    <text evidence="3">Localizes to the poles of the cell.</text>
</comment>
<comment type="domain">
    <text evidence="5">Exhibits patches of positively charged residues, which form binding sites for acidic Glu-rich peptides.</text>
</comment>